<gene>
    <name type="primary">arg2</name>
    <name type="ORF">An03g02930</name>
</gene>
<evidence type="ECO:0000250" key="1"/>
<evidence type="ECO:0000255" key="2"/>
<evidence type="ECO:0000255" key="3">
    <source>
        <dbReference type="PROSITE-ProRule" id="PRU00532"/>
    </source>
</evidence>
<evidence type="ECO:0000256" key="4">
    <source>
        <dbReference type="SAM" id="MobiDB-lite"/>
    </source>
</evidence>
<evidence type="ECO:0000305" key="5"/>
<comment type="function">
    <text evidence="1">N-acetylglutamate synthase involved in arginine biosynthesis.</text>
</comment>
<comment type="catalytic activity">
    <reaction>
        <text>L-glutamate + acetyl-CoA = N-acetyl-L-glutamate + CoA + H(+)</text>
        <dbReference type="Rhea" id="RHEA:24292"/>
        <dbReference type="ChEBI" id="CHEBI:15378"/>
        <dbReference type="ChEBI" id="CHEBI:29985"/>
        <dbReference type="ChEBI" id="CHEBI:44337"/>
        <dbReference type="ChEBI" id="CHEBI:57287"/>
        <dbReference type="ChEBI" id="CHEBI:57288"/>
        <dbReference type="EC" id="2.3.1.1"/>
    </reaction>
</comment>
<comment type="pathway">
    <text>Amino-acid biosynthesis; L-arginine biosynthesis; N(2)-acetyl-L-ornithine from L-glutamate: step 1/4.</text>
</comment>
<comment type="subcellular location">
    <subcellularLocation>
        <location evidence="1">Mitochondrion</location>
    </subcellularLocation>
</comment>
<comment type="similarity">
    <text evidence="5">Belongs to the acetyltransferase family.</text>
</comment>
<name>NAGS_ASPNC</name>
<organism>
    <name type="scientific">Aspergillus niger (strain ATCC MYA-4892 / CBS 513.88 / FGSC A1513)</name>
    <dbReference type="NCBI Taxonomy" id="425011"/>
    <lineage>
        <taxon>Eukaryota</taxon>
        <taxon>Fungi</taxon>
        <taxon>Dikarya</taxon>
        <taxon>Ascomycota</taxon>
        <taxon>Pezizomycotina</taxon>
        <taxon>Eurotiomycetes</taxon>
        <taxon>Eurotiomycetidae</taxon>
        <taxon>Eurotiales</taxon>
        <taxon>Aspergillaceae</taxon>
        <taxon>Aspergillus</taxon>
        <taxon>Aspergillus subgen. Circumdati</taxon>
    </lineage>
</organism>
<keyword id="KW-0012">Acyltransferase</keyword>
<keyword id="KW-0028">Amino-acid biosynthesis</keyword>
<keyword id="KW-0496">Mitochondrion</keyword>
<keyword id="KW-1185">Reference proteome</keyword>
<keyword id="KW-0808">Transferase</keyword>
<keyword id="KW-0809">Transit peptide</keyword>
<accession>A2QGF0</accession>
<proteinExistence type="inferred from homology"/>
<protein>
    <recommendedName>
        <fullName>Amino-acid acetyltransferase, mitochondrial</fullName>
        <ecNumber>2.3.1.1</ecNumber>
    </recommendedName>
    <alternativeName>
        <fullName>Arginine-requiring protein 2</fullName>
    </alternativeName>
    <alternativeName>
        <fullName>Glutamate N-acetyltransferase</fullName>
    </alternativeName>
    <alternativeName>
        <fullName>N-acetylglutamate synthase</fullName>
        <shortName>AGS</shortName>
        <shortName>NAGS</shortName>
    </alternativeName>
</protein>
<reference key="1">
    <citation type="journal article" date="2007" name="Nat. Biotechnol.">
        <title>Genome sequencing and analysis of the versatile cell factory Aspergillus niger CBS 513.88.</title>
        <authorList>
            <person name="Pel H.J."/>
            <person name="de Winde J.H."/>
            <person name="Archer D.B."/>
            <person name="Dyer P.S."/>
            <person name="Hofmann G."/>
            <person name="Schaap P.J."/>
            <person name="Turner G."/>
            <person name="de Vries R.P."/>
            <person name="Albang R."/>
            <person name="Albermann K."/>
            <person name="Andersen M.R."/>
            <person name="Bendtsen J.D."/>
            <person name="Benen J.A.E."/>
            <person name="van den Berg M."/>
            <person name="Breestraat S."/>
            <person name="Caddick M.X."/>
            <person name="Contreras R."/>
            <person name="Cornell M."/>
            <person name="Coutinho P.M."/>
            <person name="Danchin E.G.J."/>
            <person name="Debets A.J.M."/>
            <person name="Dekker P."/>
            <person name="van Dijck P.W.M."/>
            <person name="van Dijk A."/>
            <person name="Dijkhuizen L."/>
            <person name="Driessen A.J.M."/>
            <person name="d'Enfert C."/>
            <person name="Geysens S."/>
            <person name="Goosen C."/>
            <person name="Groot G.S.P."/>
            <person name="de Groot P.W.J."/>
            <person name="Guillemette T."/>
            <person name="Henrissat B."/>
            <person name="Herweijer M."/>
            <person name="van den Hombergh J.P.T.W."/>
            <person name="van den Hondel C.A.M.J.J."/>
            <person name="van der Heijden R.T.J.M."/>
            <person name="van der Kaaij R.M."/>
            <person name="Klis F.M."/>
            <person name="Kools H.J."/>
            <person name="Kubicek C.P."/>
            <person name="van Kuyk P.A."/>
            <person name="Lauber J."/>
            <person name="Lu X."/>
            <person name="van der Maarel M.J.E.C."/>
            <person name="Meulenberg R."/>
            <person name="Menke H."/>
            <person name="Mortimer M.A."/>
            <person name="Nielsen J."/>
            <person name="Oliver S.G."/>
            <person name="Olsthoorn M."/>
            <person name="Pal K."/>
            <person name="van Peij N.N.M.E."/>
            <person name="Ram A.F.J."/>
            <person name="Rinas U."/>
            <person name="Roubos J.A."/>
            <person name="Sagt C.M.J."/>
            <person name="Schmoll M."/>
            <person name="Sun J."/>
            <person name="Ussery D."/>
            <person name="Varga J."/>
            <person name="Vervecken W."/>
            <person name="van de Vondervoort P.J.J."/>
            <person name="Wedler H."/>
            <person name="Woesten H.A.B."/>
            <person name="Zeng A.-P."/>
            <person name="van Ooyen A.J.J."/>
            <person name="Visser J."/>
            <person name="Stam H."/>
        </authorList>
    </citation>
    <scope>NUCLEOTIDE SEQUENCE [LARGE SCALE GENOMIC DNA]</scope>
    <source>
        <strain>ATCC MYA-4892 / CBS 513.88 / FGSC A1513</strain>
    </source>
</reference>
<dbReference type="EC" id="2.3.1.1"/>
<dbReference type="EMBL" id="AM270051">
    <property type="protein sequence ID" value="CAK44592.1"/>
    <property type="molecule type" value="Genomic_DNA"/>
</dbReference>
<dbReference type="RefSeq" id="XP_001390189.1">
    <property type="nucleotide sequence ID" value="XM_001390152.1"/>
</dbReference>
<dbReference type="SMR" id="A2QGF0"/>
<dbReference type="EnsemblFungi" id="CAK44592">
    <property type="protein sequence ID" value="CAK44592"/>
    <property type="gene ID" value="An03g02930"/>
</dbReference>
<dbReference type="GeneID" id="4980283"/>
<dbReference type="KEGG" id="ang:An03g02930"/>
<dbReference type="VEuPathDB" id="FungiDB:An03g02930"/>
<dbReference type="HOGENOM" id="CLU_013088_0_0_1"/>
<dbReference type="UniPathway" id="UPA00068">
    <property type="reaction ID" value="UER00106"/>
</dbReference>
<dbReference type="Proteomes" id="UP000006706">
    <property type="component" value="Chromosome 6R"/>
</dbReference>
<dbReference type="GO" id="GO:0005759">
    <property type="term" value="C:mitochondrial matrix"/>
    <property type="evidence" value="ECO:0007669"/>
    <property type="project" value="TreeGrafter"/>
</dbReference>
<dbReference type="GO" id="GO:0004042">
    <property type="term" value="F:L-glutamate N-acetyltransferase activity"/>
    <property type="evidence" value="ECO:0007669"/>
    <property type="project" value="InterPro"/>
</dbReference>
<dbReference type="GO" id="GO:0006526">
    <property type="term" value="P:L-arginine biosynthetic process"/>
    <property type="evidence" value="ECO:0007669"/>
    <property type="project" value="UniProtKB-UniPathway"/>
</dbReference>
<dbReference type="GO" id="GO:0006592">
    <property type="term" value="P:ornithine biosynthetic process"/>
    <property type="evidence" value="ECO:0007669"/>
    <property type="project" value="TreeGrafter"/>
</dbReference>
<dbReference type="FunFam" id="3.40.630.30:FF:000049">
    <property type="entry name" value="Amino-acid acetyltransferase, mitochondrial"/>
    <property type="match status" value="1"/>
</dbReference>
<dbReference type="Gene3D" id="3.40.630.30">
    <property type="match status" value="1"/>
</dbReference>
<dbReference type="InterPro" id="IPR011190">
    <property type="entry name" value="GlcNAc_Synth_fun"/>
</dbReference>
<dbReference type="InterPro" id="IPR006855">
    <property type="entry name" value="Vertebrate-like_GNAT_dom"/>
</dbReference>
<dbReference type="PANTHER" id="PTHR23342:SF4">
    <property type="entry name" value="AMINO-ACID ACETYLTRANSFERASE, MITOCHONDRIAL"/>
    <property type="match status" value="1"/>
</dbReference>
<dbReference type="PANTHER" id="PTHR23342">
    <property type="entry name" value="N-ACETYLGLUTAMATE SYNTHASE"/>
    <property type="match status" value="1"/>
</dbReference>
<dbReference type="Pfam" id="PF04768">
    <property type="entry name" value="NAT"/>
    <property type="match status" value="1"/>
</dbReference>
<dbReference type="PIRSF" id="PIRSF007892">
    <property type="entry name" value="NAGS_fungal"/>
    <property type="match status" value="1"/>
</dbReference>
<dbReference type="PROSITE" id="PS51731">
    <property type="entry name" value="GNAT_NAGS"/>
    <property type="match status" value="1"/>
</dbReference>
<sequence>MSSRTLVGLRSTTSTHLQRSGVAAAAAVSSSSTSSSGSAPRRCLSSASGRQVQQSAEFSSSSKSWDRLGRRAKEKLLDREFFLSLLNSASTKREAKSYLARLKAQHQGTPPLKPAAKQPGVAEAAAPVSSGASSTSFYGASRSVYDSPVFRHDSTPTPPLQDVSERLHLALVKITTPQLLDDSTVNGVAKTLSQLNRLGMACCVVVDPGTAGDSNQLRRIAAEQADRISTAVDAQPDSKSAHIDSVLSVSALNPEAPKVLSRKLLLGPLRDGHIVVLAPIAYTEDVPRAVTVSASDAILALTKELAGLATNPDPDEDPIRTAQRIAGLQEEVSLDRVILLDPLGGIPAFSGPQTSHVFINMEQEFDDIENELLRVWQSAASAKNNLPEEGLPSIADSNPLSKFADTEVVPVPPSQKAYSSDLTLGTSMVEGHINNLRLSQAALAMLPSASSSIITSPLEVANSAQSPGGASPDVSAVGTRRQRNPLIHNLLTDKPLLSSSLPLSRRAALNGRRDSIATQPSHTTFVKRGMPLTIIPNPWLSPWTAKDRPRLGLDDPSIDLPRLVHLIEDSFNRKLDVQDYLNRVNGRLAGLIIAGEYEGGAILTWELPPGVEDDGSEASQARMVPYLDKFAVLKRSQGAGGVADIVFNAMVRSCFPNGVCWRSRKDNPVNKWYFERSQGTWKLSDMNWTMFWTTPGLTEDSQKFRDYEAVCRSIQPSWADDTGVVD</sequence>
<feature type="transit peptide" description="Mitochondrion" evidence="2">
    <location>
        <begin position="1"/>
        <end position="44"/>
    </location>
</feature>
<feature type="chain" id="PRO_5000219763" description="Amino-acid acetyltransferase, mitochondrial">
    <location>
        <begin position="45"/>
        <end position="726"/>
    </location>
</feature>
<feature type="domain" description="N-acetyltransferase" evidence="3">
    <location>
        <begin position="547"/>
        <end position="716"/>
    </location>
</feature>
<feature type="region of interest" description="Disordered" evidence="4">
    <location>
        <begin position="1"/>
        <end position="64"/>
    </location>
</feature>
<feature type="compositionally biased region" description="Polar residues" evidence="4">
    <location>
        <begin position="1"/>
        <end position="18"/>
    </location>
</feature>
<feature type="compositionally biased region" description="Low complexity" evidence="4">
    <location>
        <begin position="20"/>
        <end position="39"/>
    </location>
</feature>
<feature type="compositionally biased region" description="Polar residues" evidence="4">
    <location>
        <begin position="45"/>
        <end position="58"/>
    </location>
</feature>